<proteinExistence type="inferred from homology"/>
<sequence length="508" mass="57810">MERIKELRDLMSQSRTREILTKTTVDHMAIIKKYTSGRQEKNPALRMKWMMAMKYPITADKRIMEMIPERNEQGQTLWSKTNDAGSDRVMVSPLAVTWWNRNGPTTSTVHYPKVYKTYFEKVERLKHGTFGPVHFRNQVKIRRRVDINPGHADLSAKEAQDVIMEVVFPNEVGARILTSESQLTITKEKKEELQDCKIAPLMVAYMLERELVRKTRFLPVAGGTSSVYIEVLHLTQGTCWEQMYTPGGEVRNDDVDQSLIIAARNIVRRATVSADPLASLLEMCHSTQIGGIRMVDILRQNPTEEQAVDICKAAMGLRISSSFSFGGFTFKRTNGSSVKKEEEVLTGNLQTLKIKVHEGYEEFTMVGRRATAILRKATRRLIQLIVSGRDEQSIAEAIIVAMVFSQEDCMIKAVRGDLNFVNRANQRLNPMHQLLRHFQKDAKVLFQNWGIEPIDNVMGMIGILPDMTPSAEMSLRGVRVSKMGVDEYSSTERVVQPHRSRAECSFLL</sequence>
<organismHost>
    <name type="scientific">Aves</name>
    <dbReference type="NCBI Taxonomy" id="8782"/>
</organismHost>
<organismHost>
    <name type="scientific">Felis catus</name>
    <name type="common">Cat</name>
    <name type="synonym">Felis silvestris catus</name>
    <dbReference type="NCBI Taxonomy" id="9685"/>
</organismHost>
<organismHost>
    <name type="scientific">Homo sapiens</name>
    <name type="common">Human</name>
    <dbReference type="NCBI Taxonomy" id="9606"/>
</organismHost>
<organismHost>
    <name type="scientific">Panthera pardus</name>
    <name type="common">Leopard</name>
    <name type="synonym">Felis pardus</name>
    <dbReference type="NCBI Taxonomy" id="9691"/>
</organismHost>
<organismHost>
    <name type="scientific">Panthera tigris</name>
    <name type="common">Tiger</name>
    <dbReference type="NCBI Taxonomy" id="9694"/>
</organismHost>
<organismHost>
    <name type="scientific">Sus scrofa</name>
    <name type="common">Pig</name>
    <dbReference type="NCBI Taxonomy" id="9823"/>
</organismHost>
<accession>P0DOG5</accession>
<gene>
    <name type="primary">PB2</name>
</gene>
<protein>
    <recommendedName>
        <fullName>PB2-S1</fullName>
    </recommendedName>
</protein>
<keyword id="KW-0025">Alternative splicing</keyword>
<keyword id="KW-1035">Host cytoplasm</keyword>
<keyword id="KW-1045">Host mitochondrion</keyword>
<keyword id="KW-1185">Reference proteome</keyword>
<reference key="1">
    <citation type="journal article" date="1999" name="Virology">
        <title>Genetic characterization of the pathogenic influenza A/Goose/Guangdong/1/96 (H5N1) virus: similarity of its hemagglutinin gene to those of H5N1 viruses from the 1997 outbreaks in Hong Kong.</title>
        <authorList>
            <person name="Xu X."/>
            <person name="Subbarao K."/>
            <person name="Cox N.J."/>
            <person name="Guo Y."/>
        </authorList>
    </citation>
    <scope>NUCLEOTIDE SEQUENCE [GENOMIC RNA]</scope>
</reference>
<dbReference type="EMBL" id="AF144300">
    <property type="status" value="NOT_ANNOTATED_CDS"/>
    <property type="molecule type" value="Genomic_RNA"/>
</dbReference>
<dbReference type="SMR" id="P0DOG5"/>
<dbReference type="Proteomes" id="UP000131152">
    <property type="component" value="Genome"/>
</dbReference>
<dbReference type="GO" id="GO:0044164">
    <property type="term" value="C:host cell cytosol"/>
    <property type="evidence" value="ECO:0007669"/>
    <property type="project" value="UniProtKB-SubCell"/>
</dbReference>
<dbReference type="GO" id="GO:0033650">
    <property type="term" value="C:host cell mitochondrion"/>
    <property type="evidence" value="ECO:0007669"/>
    <property type="project" value="UniProtKB-SubCell"/>
</dbReference>
<dbReference type="InterPro" id="IPR049110">
    <property type="entry name" value="Flu_PB2_2nd"/>
</dbReference>
<dbReference type="InterPro" id="IPR048298">
    <property type="entry name" value="Flu_PB2_CAP-bd"/>
</dbReference>
<dbReference type="InterPro" id="IPR049111">
    <property type="entry name" value="Flu_PB2_middle"/>
</dbReference>
<dbReference type="InterPro" id="IPR049106">
    <property type="entry name" value="Flu_PB2_N"/>
</dbReference>
<dbReference type="InterPro" id="IPR049113">
    <property type="entry name" value="PB2_helical"/>
</dbReference>
<dbReference type="Pfam" id="PF20947">
    <property type="entry name" value="Flu_PB2_1st"/>
    <property type="match status" value="1"/>
</dbReference>
<dbReference type="Pfam" id="PF20948">
    <property type="entry name" value="Flu_PB2_2nd"/>
    <property type="match status" value="1"/>
</dbReference>
<dbReference type="Pfam" id="PF20949">
    <property type="entry name" value="Flu_PB2_3rd"/>
    <property type="match status" value="1"/>
</dbReference>
<dbReference type="Pfam" id="PF20950">
    <property type="entry name" value="Flu_PB2_4th"/>
    <property type="match status" value="1"/>
</dbReference>
<dbReference type="Pfam" id="PF00604">
    <property type="entry name" value="Flu_PB2_5th"/>
    <property type="match status" value="1"/>
</dbReference>
<feature type="chain" id="PRO_0000440603" description="PB2-S1">
    <location>
        <begin position="1"/>
        <end position="508"/>
    </location>
</feature>
<name>PB2S1_I96A0</name>
<evidence type="ECO:0000250" key="1">
    <source>
        <dbReference type="UniProtKB" id="P03427"/>
    </source>
</evidence>
<evidence type="ECO:0000250" key="2">
    <source>
        <dbReference type="UniProtKB" id="P0DOG3"/>
    </source>
</evidence>
<comment type="function">
    <text evidence="2">May participate in the inhibition of type I interferon induction through inhibition of the host mitochondrial antiviral signaling protein MAVS. The knockout of PB2-S1 has no detectable effects on laboratory infected mice.</text>
</comment>
<comment type="subcellular location">
    <subcellularLocation>
        <location evidence="2">Host mitochondrion</location>
    </subcellularLocation>
    <subcellularLocation>
        <location evidence="2">Host cytoplasm</location>
        <location evidence="2">Host cytosol</location>
    </subcellularLocation>
</comment>
<comment type="alternative products">
    <event type="alternative splicing"/>
    <isoform>
        <id>P0DOG5-1</id>
        <name evidence="1">PB2-S1</name>
        <sequence type="displayed"/>
    </isoform>
    <isoform>
        <id>Q9Q0V1-1</id>
        <name>Polymerase basic protein 2</name>
        <sequence type="external"/>
    </isoform>
</comment>
<organism>
    <name type="scientific">Influenza A virus (strain A/Goose/Guangdong/1/1996 H5N1 genotype Gs/Gd)</name>
    <dbReference type="NCBI Taxonomy" id="93838"/>
    <lineage>
        <taxon>Viruses</taxon>
        <taxon>Riboviria</taxon>
        <taxon>Orthornavirae</taxon>
        <taxon>Negarnaviricota</taxon>
        <taxon>Polyploviricotina</taxon>
        <taxon>Insthoviricetes</taxon>
        <taxon>Articulavirales</taxon>
        <taxon>Orthomyxoviridae</taxon>
        <taxon>Alphainfluenzavirus</taxon>
        <taxon>Alphainfluenzavirus influenzae</taxon>
        <taxon>Influenza A virus</taxon>
    </lineage>
</organism>